<dbReference type="EMBL" id="CP000886">
    <property type="protein sequence ID" value="ABX67745.1"/>
    <property type="molecule type" value="Genomic_DNA"/>
</dbReference>
<dbReference type="RefSeq" id="WP_000092175.1">
    <property type="nucleotide sequence ID" value="NC_010102.1"/>
</dbReference>
<dbReference type="SMR" id="A9N5P5"/>
<dbReference type="KEGG" id="spq:SPAB_02363"/>
<dbReference type="PATRIC" id="fig|1016998.12.peg.2235"/>
<dbReference type="HOGENOM" id="CLU_001265_60_2_6"/>
<dbReference type="BioCyc" id="SENT1016998:SPAB_RS09625-MONOMER"/>
<dbReference type="Proteomes" id="UP000008556">
    <property type="component" value="Chromosome"/>
</dbReference>
<dbReference type="GO" id="GO:0005886">
    <property type="term" value="C:plasma membrane"/>
    <property type="evidence" value="ECO:0007669"/>
    <property type="project" value="UniProtKB-SubCell"/>
</dbReference>
<dbReference type="GO" id="GO:0022857">
    <property type="term" value="F:transmembrane transporter activity"/>
    <property type="evidence" value="ECO:0007669"/>
    <property type="project" value="UniProtKB-UniRule"/>
</dbReference>
<dbReference type="CDD" id="cd17329">
    <property type="entry name" value="MFS_MdtH_MDR_like"/>
    <property type="match status" value="1"/>
</dbReference>
<dbReference type="FunFam" id="1.20.1250.20:FF:000039">
    <property type="entry name" value="Multidrug resistance protein MdtH"/>
    <property type="match status" value="1"/>
</dbReference>
<dbReference type="Gene3D" id="1.20.1250.20">
    <property type="entry name" value="MFS general substrate transporter like domains"/>
    <property type="match status" value="1"/>
</dbReference>
<dbReference type="HAMAP" id="MF_01529">
    <property type="entry name" value="MFS_MdtH"/>
    <property type="match status" value="1"/>
</dbReference>
<dbReference type="InterPro" id="IPR011701">
    <property type="entry name" value="MFS"/>
</dbReference>
<dbReference type="InterPro" id="IPR020846">
    <property type="entry name" value="MFS_dom"/>
</dbReference>
<dbReference type="InterPro" id="IPR036259">
    <property type="entry name" value="MFS_trans_sf"/>
</dbReference>
<dbReference type="InterPro" id="IPR050171">
    <property type="entry name" value="MFS_Transporters"/>
</dbReference>
<dbReference type="InterPro" id="IPR022855">
    <property type="entry name" value="Multidrug-R_MdtH"/>
</dbReference>
<dbReference type="NCBIfam" id="NF008650">
    <property type="entry name" value="PRK11646.1"/>
    <property type="match status" value="1"/>
</dbReference>
<dbReference type="PANTHER" id="PTHR23517:SF2">
    <property type="entry name" value="MULTIDRUG RESISTANCE PROTEIN MDTH"/>
    <property type="match status" value="1"/>
</dbReference>
<dbReference type="PANTHER" id="PTHR23517">
    <property type="entry name" value="RESISTANCE PROTEIN MDTM, PUTATIVE-RELATED-RELATED"/>
    <property type="match status" value="1"/>
</dbReference>
<dbReference type="Pfam" id="PF07690">
    <property type="entry name" value="MFS_1"/>
    <property type="match status" value="1"/>
</dbReference>
<dbReference type="SUPFAM" id="SSF103473">
    <property type="entry name" value="MFS general substrate transporter"/>
    <property type="match status" value="1"/>
</dbReference>
<dbReference type="PROSITE" id="PS50850">
    <property type="entry name" value="MFS"/>
    <property type="match status" value="1"/>
</dbReference>
<keyword id="KW-0997">Cell inner membrane</keyword>
<keyword id="KW-1003">Cell membrane</keyword>
<keyword id="KW-0472">Membrane</keyword>
<keyword id="KW-0812">Transmembrane</keyword>
<keyword id="KW-1133">Transmembrane helix</keyword>
<keyword id="KW-0813">Transport</keyword>
<evidence type="ECO:0000255" key="1">
    <source>
        <dbReference type="HAMAP-Rule" id="MF_01529"/>
    </source>
</evidence>
<accession>A9N5P5</accession>
<sequence length="402" mass="44414">MSRVSQARNLGKYFLLIDNMLVVLGFFVVFPLISIRFVDQMGWAAVMVGIALGLRQFIQQGLGIFGGAIADRFGAKPMIVTGMLMRAAGFATMGIAHEPWLLWFSCFLSGLGGTLFDPPRSALVVKLIRPEQRGRFFSLLMMQDSAGAVIGALLGSWLLQYDFRLVCATGAILFILCALFNAWLLPAWKLSTVRTPVREGMRRVMSDKRFVTYVLTLAGYYMLAVQVMLMLPIMVNDIAGSPAAVKWMYAIEACLSLTLLYPIARWSEKRFRLEHRLMAGLLVMSLSMIPIGMVGNLQQLFTLICAFYIGSVIAEPARETLSASLADARARGSYMGFSRLGLAIGGAIGYIGGGWLFDMGKALTQPELPWMMLGIIGFITFLALGWQFSHKRTPRRMLEPGA</sequence>
<gene>
    <name evidence="1" type="primary">mdtH</name>
    <name type="ordered locus">SPAB_02363</name>
</gene>
<protein>
    <recommendedName>
        <fullName evidence="1">Multidrug resistance protein MdtH</fullName>
    </recommendedName>
</protein>
<feature type="chain" id="PRO_1000087590" description="Multidrug resistance protein MdtH">
    <location>
        <begin position="1"/>
        <end position="402"/>
    </location>
</feature>
<feature type="topological domain" description="Cytoplasmic" evidence="1">
    <location>
        <begin position="1"/>
        <end position="12"/>
    </location>
</feature>
<feature type="transmembrane region" description="Helical" evidence="1">
    <location>
        <begin position="13"/>
        <end position="33"/>
    </location>
</feature>
<feature type="topological domain" description="Periplasmic" evidence="1">
    <location>
        <begin position="34"/>
        <end position="98"/>
    </location>
</feature>
<feature type="transmembrane region" description="Helical" evidence="1">
    <location>
        <begin position="99"/>
        <end position="116"/>
    </location>
</feature>
<feature type="topological domain" description="Cytoplasmic" evidence="1">
    <location>
        <begin position="117"/>
        <end position="138"/>
    </location>
</feature>
<feature type="transmembrane region" description="Helical" evidence="1">
    <location>
        <begin position="139"/>
        <end position="159"/>
    </location>
</feature>
<feature type="topological domain" description="Periplasmic" evidence="1">
    <location>
        <begin position="160"/>
        <end position="164"/>
    </location>
</feature>
<feature type="transmembrane region" description="Helical" evidence="1">
    <location>
        <begin position="165"/>
        <end position="185"/>
    </location>
</feature>
<feature type="topological domain" description="Cytoplasmic" evidence="1">
    <location>
        <begin position="186"/>
        <end position="213"/>
    </location>
</feature>
<feature type="transmembrane region" description="Helical" evidence="1">
    <location>
        <begin position="214"/>
        <end position="234"/>
    </location>
</feature>
<feature type="topological domain" description="Periplasmic" evidence="1">
    <location>
        <begin position="235"/>
        <end position="243"/>
    </location>
</feature>
<feature type="transmembrane region" description="Helical" evidence="1">
    <location>
        <begin position="244"/>
        <end position="264"/>
    </location>
</feature>
<feature type="topological domain" description="Cytoplasmic" evidence="1">
    <location>
        <begin position="265"/>
        <end position="276"/>
    </location>
</feature>
<feature type="transmembrane region" description="Helical" evidence="1">
    <location>
        <begin position="277"/>
        <end position="297"/>
    </location>
</feature>
<feature type="topological domain" description="Periplasmic" evidence="1">
    <location>
        <begin position="298"/>
        <end position="299"/>
    </location>
</feature>
<feature type="transmembrane region" description="Helical" evidence="1">
    <location>
        <begin position="300"/>
        <end position="320"/>
    </location>
</feature>
<feature type="topological domain" description="Cytoplasmic" evidence="1">
    <location>
        <begin position="321"/>
        <end position="339"/>
    </location>
</feature>
<feature type="transmembrane region" description="Helical" evidence="1">
    <location>
        <begin position="340"/>
        <end position="360"/>
    </location>
</feature>
<feature type="topological domain" description="Periplasmic" evidence="1">
    <location>
        <begin position="361"/>
        <end position="367"/>
    </location>
</feature>
<feature type="transmembrane region" description="Helical" evidence="1">
    <location>
        <begin position="368"/>
        <end position="388"/>
    </location>
</feature>
<feature type="topological domain" description="Cytoplasmic" evidence="1">
    <location>
        <begin position="389"/>
        <end position="402"/>
    </location>
</feature>
<reference key="1">
    <citation type="submission" date="2007-11" db="EMBL/GenBank/DDBJ databases">
        <authorList>
            <consortium name="The Salmonella enterica serovar Paratyphi B Genome Sequencing Project"/>
            <person name="McClelland M."/>
            <person name="Sanderson E.K."/>
            <person name="Porwollik S."/>
            <person name="Spieth J."/>
            <person name="Clifton W.S."/>
            <person name="Fulton R."/>
            <person name="Cordes M."/>
            <person name="Wollam A."/>
            <person name="Shah N."/>
            <person name="Pepin K."/>
            <person name="Bhonagiri V."/>
            <person name="Nash W."/>
            <person name="Johnson M."/>
            <person name="Thiruvilangam P."/>
            <person name="Wilson R."/>
        </authorList>
    </citation>
    <scope>NUCLEOTIDE SEQUENCE [LARGE SCALE GENOMIC DNA]</scope>
    <source>
        <strain>ATCC BAA-1250 / SPB7</strain>
    </source>
</reference>
<proteinExistence type="inferred from homology"/>
<name>MDTH_SALPB</name>
<comment type="subcellular location">
    <subcellularLocation>
        <location evidence="1">Cell inner membrane</location>
        <topology evidence="1">Multi-pass membrane protein</topology>
    </subcellularLocation>
</comment>
<comment type="similarity">
    <text evidence="1">Belongs to the major facilitator superfamily. DHA1 family. MdtH (TC 2.A.1.2.21) subfamily.</text>
</comment>
<organism>
    <name type="scientific">Salmonella paratyphi B (strain ATCC BAA-1250 / SPB7)</name>
    <dbReference type="NCBI Taxonomy" id="1016998"/>
    <lineage>
        <taxon>Bacteria</taxon>
        <taxon>Pseudomonadati</taxon>
        <taxon>Pseudomonadota</taxon>
        <taxon>Gammaproteobacteria</taxon>
        <taxon>Enterobacterales</taxon>
        <taxon>Enterobacteriaceae</taxon>
        <taxon>Salmonella</taxon>
    </lineage>
</organism>